<reference key="1">
    <citation type="journal article" date="2000" name="Nature">
        <title>The genome sequence of the plant pathogen Xylella fastidiosa.</title>
        <authorList>
            <person name="Simpson A.J.G."/>
            <person name="Reinach F.C."/>
            <person name="Arruda P."/>
            <person name="Abreu F.A."/>
            <person name="Acencio M."/>
            <person name="Alvarenga R."/>
            <person name="Alves L.M.C."/>
            <person name="Araya J.E."/>
            <person name="Baia G.S."/>
            <person name="Baptista C.S."/>
            <person name="Barros M.H."/>
            <person name="Bonaccorsi E.D."/>
            <person name="Bordin S."/>
            <person name="Bove J.M."/>
            <person name="Briones M.R.S."/>
            <person name="Bueno M.R.P."/>
            <person name="Camargo A.A."/>
            <person name="Camargo L.E.A."/>
            <person name="Carraro D.M."/>
            <person name="Carrer H."/>
            <person name="Colauto N.B."/>
            <person name="Colombo C."/>
            <person name="Costa F.F."/>
            <person name="Costa M.C.R."/>
            <person name="Costa-Neto C.M."/>
            <person name="Coutinho L.L."/>
            <person name="Cristofani M."/>
            <person name="Dias-Neto E."/>
            <person name="Docena C."/>
            <person name="El-Dorry H."/>
            <person name="Facincani A.P."/>
            <person name="Ferreira A.J.S."/>
            <person name="Ferreira V.C.A."/>
            <person name="Ferro J.A."/>
            <person name="Fraga J.S."/>
            <person name="Franca S.C."/>
            <person name="Franco M.C."/>
            <person name="Frohme M."/>
            <person name="Furlan L.R."/>
            <person name="Garnier M."/>
            <person name="Goldman G.H."/>
            <person name="Goldman M.H.S."/>
            <person name="Gomes S.L."/>
            <person name="Gruber A."/>
            <person name="Ho P.L."/>
            <person name="Hoheisel J.D."/>
            <person name="Junqueira M.L."/>
            <person name="Kemper E.L."/>
            <person name="Kitajima J.P."/>
            <person name="Krieger J.E."/>
            <person name="Kuramae E.E."/>
            <person name="Laigret F."/>
            <person name="Lambais M.R."/>
            <person name="Leite L.C.C."/>
            <person name="Lemos E.G.M."/>
            <person name="Lemos M.V.F."/>
            <person name="Lopes S.A."/>
            <person name="Lopes C.R."/>
            <person name="Machado J.A."/>
            <person name="Machado M.A."/>
            <person name="Madeira A.M.B.N."/>
            <person name="Madeira H.M.F."/>
            <person name="Marino C.L."/>
            <person name="Marques M.V."/>
            <person name="Martins E.A.L."/>
            <person name="Martins E.M.F."/>
            <person name="Matsukuma A.Y."/>
            <person name="Menck C.F.M."/>
            <person name="Miracca E.C."/>
            <person name="Miyaki C.Y."/>
            <person name="Monteiro-Vitorello C.B."/>
            <person name="Moon D.H."/>
            <person name="Nagai M.A."/>
            <person name="Nascimento A.L.T.O."/>
            <person name="Netto L.E.S."/>
            <person name="Nhani A. Jr."/>
            <person name="Nobrega F.G."/>
            <person name="Nunes L.R."/>
            <person name="Oliveira M.A."/>
            <person name="de Oliveira M.C."/>
            <person name="de Oliveira R.C."/>
            <person name="Palmieri D.A."/>
            <person name="Paris A."/>
            <person name="Peixoto B.R."/>
            <person name="Pereira G.A.G."/>
            <person name="Pereira H.A. Jr."/>
            <person name="Pesquero J.B."/>
            <person name="Quaggio R.B."/>
            <person name="Roberto P.G."/>
            <person name="Rodrigues V."/>
            <person name="de Rosa A.J.M."/>
            <person name="de Rosa V.E. Jr."/>
            <person name="de Sa R.G."/>
            <person name="Santelli R.V."/>
            <person name="Sawasaki H.E."/>
            <person name="da Silva A.C.R."/>
            <person name="da Silva A.M."/>
            <person name="da Silva F.R."/>
            <person name="Silva W.A. Jr."/>
            <person name="da Silveira J.F."/>
            <person name="Silvestri M.L.Z."/>
            <person name="Siqueira W.J."/>
            <person name="de Souza A.A."/>
            <person name="de Souza A.P."/>
            <person name="Terenzi M.F."/>
            <person name="Truffi D."/>
            <person name="Tsai S.M."/>
            <person name="Tsuhako M.H."/>
            <person name="Vallada H."/>
            <person name="Van Sluys M.A."/>
            <person name="Verjovski-Almeida S."/>
            <person name="Vettore A.L."/>
            <person name="Zago M.A."/>
            <person name="Zatz M."/>
            <person name="Meidanis J."/>
            <person name="Setubal J.C."/>
        </authorList>
    </citation>
    <scope>NUCLEOTIDE SEQUENCE [LARGE SCALE GENOMIC DNA]</scope>
    <source>
        <strain>9a5c</strain>
    </source>
</reference>
<proteinExistence type="inferred from homology"/>
<evidence type="ECO:0000255" key="1">
    <source>
        <dbReference type="HAMAP-Rule" id="MF_01209"/>
    </source>
</evidence>
<evidence type="ECO:0000305" key="2"/>
<gene>
    <name evidence="1" type="primary">carA</name>
    <name type="ordered locus">XF_1106</name>
</gene>
<protein>
    <recommendedName>
        <fullName evidence="1">Carbamoyl phosphate synthase small chain</fullName>
        <ecNumber evidence="1">6.3.5.5</ecNumber>
    </recommendedName>
    <alternativeName>
        <fullName evidence="1">Carbamoyl phosphate synthetase glutamine chain</fullName>
    </alternativeName>
</protein>
<organism>
    <name type="scientific">Xylella fastidiosa (strain 9a5c)</name>
    <dbReference type="NCBI Taxonomy" id="160492"/>
    <lineage>
        <taxon>Bacteria</taxon>
        <taxon>Pseudomonadati</taxon>
        <taxon>Pseudomonadota</taxon>
        <taxon>Gammaproteobacteria</taxon>
        <taxon>Lysobacterales</taxon>
        <taxon>Lysobacteraceae</taxon>
        <taxon>Xylella</taxon>
    </lineage>
</organism>
<keyword id="KW-0028">Amino-acid biosynthesis</keyword>
<keyword id="KW-0055">Arginine biosynthesis</keyword>
<keyword id="KW-0067">ATP-binding</keyword>
<keyword id="KW-0315">Glutamine amidotransferase</keyword>
<keyword id="KW-0436">Ligase</keyword>
<keyword id="KW-0547">Nucleotide-binding</keyword>
<keyword id="KW-0665">Pyrimidine biosynthesis</keyword>
<name>CARA_XYLFA</name>
<comment type="function">
    <text evidence="1">Small subunit of the glutamine-dependent carbamoyl phosphate synthetase (CPSase). CPSase catalyzes the formation of carbamoyl phosphate from the ammonia moiety of glutamine, carbonate, and phosphate donated by ATP, constituting the first step of 2 biosynthetic pathways, one leading to arginine and/or urea and the other to pyrimidine nucleotides. The small subunit (glutamine amidotransferase) binds and cleaves glutamine to supply the large subunit with the substrate ammonia.</text>
</comment>
<comment type="catalytic activity">
    <reaction evidence="1">
        <text>hydrogencarbonate + L-glutamine + 2 ATP + H2O = carbamoyl phosphate + L-glutamate + 2 ADP + phosphate + 2 H(+)</text>
        <dbReference type="Rhea" id="RHEA:18633"/>
        <dbReference type="ChEBI" id="CHEBI:15377"/>
        <dbReference type="ChEBI" id="CHEBI:15378"/>
        <dbReference type="ChEBI" id="CHEBI:17544"/>
        <dbReference type="ChEBI" id="CHEBI:29985"/>
        <dbReference type="ChEBI" id="CHEBI:30616"/>
        <dbReference type="ChEBI" id="CHEBI:43474"/>
        <dbReference type="ChEBI" id="CHEBI:58228"/>
        <dbReference type="ChEBI" id="CHEBI:58359"/>
        <dbReference type="ChEBI" id="CHEBI:456216"/>
        <dbReference type="EC" id="6.3.5.5"/>
    </reaction>
</comment>
<comment type="catalytic activity">
    <molecule>Carbamoyl phosphate synthase small chain</molecule>
    <reaction evidence="1">
        <text>L-glutamine + H2O = L-glutamate + NH4(+)</text>
        <dbReference type="Rhea" id="RHEA:15889"/>
        <dbReference type="ChEBI" id="CHEBI:15377"/>
        <dbReference type="ChEBI" id="CHEBI:28938"/>
        <dbReference type="ChEBI" id="CHEBI:29985"/>
        <dbReference type="ChEBI" id="CHEBI:58359"/>
    </reaction>
</comment>
<comment type="pathway">
    <text evidence="1">Amino-acid biosynthesis; L-arginine biosynthesis; carbamoyl phosphate from bicarbonate: step 1/1.</text>
</comment>
<comment type="pathway">
    <text evidence="1">Pyrimidine metabolism; UMP biosynthesis via de novo pathway; (S)-dihydroorotate from bicarbonate: step 1/3.</text>
</comment>
<comment type="subunit">
    <text evidence="1">Composed of two chains; the small (or glutamine) chain promotes the hydrolysis of glutamine to ammonia, which is used by the large (or ammonia) chain to synthesize carbamoyl phosphate. Tetramer of heterodimers (alpha,beta)4.</text>
</comment>
<comment type="similarity">
    <text evidence="1">Belongs to the CarA family.</text>
</comment>
<comment type="sequence caution" evidence="2">
    <conflict type="erroneous initiation">
        <sequence resource="EMBL-CDS" id="AAF83916"/>
    </conflict>
</comment>
<dbReference type="EC" id="6.3.5.5" evidence="1"/>
<dbReference type="EMBL" id="AE003849">
    <property type="protein sequence ID" value="AAF83916.1"/>
    <property type="status" value="ALT_INIT"/>
    <property type="molecule type" value="Genomic_DNA"/>
</dbReference>
<dbReference type="PIR" id="B82723">
    <property type="entry name" value="B82723"/>
</dbReference>
<dbReference type="RefSeq" id="WP_010893623.1">
    <property type="nucleotide sequence ID" value="NC_002488.3"/>
</dbReference>
<dbReference type="SMR" id="Q9PEC2"/>
<dbReference type="STRING" id="160492.XF_1106"/>
<dbReference type="KEGG" id="xfa:XF_1106"/>
<dbReference type="PATRIC" id="fig|160492.11.peg.1173"/>
<dbReference type="eggNOG" id="COG0505">
    <property type="taxonomic scope" value="Bacteria"/>
</dbReference>
<dbReference type="HOGENOM" id="CLU_035901_2_1_6"/>
<dbReference type="UniPathway" id="UPA00068">
    <property type="reaction ID" value="UER00171"/>
</dbReference>
<dbReference type="UniPathway" id="UPA00070">
    <property type="reaction ID" value="UER00115"/>
</dbReference>
<dbReference type="Proteomes" id="UP000000812">
    <property type="component" value="Chromosome"/>
</dbReference>
<dbReference type="GO" id="GO:0005524">
    <property type="term" value="F:ATP binding"/>
    <property type="evidence" value="ECO:0007669"/>
    <property type="project" value="UniProtKB-UniRule"/>
</dbReference>
<dbReference type="GO" id="GO:0004088">
    <property type="term" value="F:carbamoyl-phosphate synthase (glutamine-hydrolyzing) activity"/>
    <property type="evidence" value="ECO:0007669"/>
    <property type="project" value="UniProtKB-UniRule"/>
</dbReference>
<dbReference type="GO" id="GO:0004359">
    <property type="term" value="F:glutaminase activity"/>
    <property type="evidence" value="ECO:0007669"/>
    <property type="project" value="RHEA"/>
</dbReference>
<dbReference type="GO" id="GO:0006207">
    <property type="term" value="P:'de novo' pyrimidine nucleobase biosynthetic process"/>
    <property type="evidence" value="ECO:0007669"/>
    <property type="project" value="InterPro"/>
</dbReference>
<dbReference type="GO" id="GO:0044205">
    <property type="term" value="P:'de novo' UMP biosynthetic process"/>
    <property type="evidence" value="ECO:0007669"/>
    <property type="project" value="UniProtKB-UniRule"/>
</dbReference>
<dbReference type="GO" id="GO:0006541">
    <property type="term" value="P:glutamine metabolic process"/>
    <property type="evidence" value="ECO:0007669"/>
    <property type="project" value="InterPro"/>
</dbReference>
<dbReference type="GO" id="GO:0006526">
    <property type="term" value="P:L-arginine biosynthetic process"/>
    <property type="evidence" value="ECO:0007669"/>
    <property type="project" value="UniProtKB-UniRule"/>
</dbReference>
<dbReference type="CDD" id="cd01744">
    <property type="entry name" value="GATase1_CPSase"/>
    <property type="match status" value="1"/>
</dbReference>
<dbReference type="FunFam" id="3.40.50.880:FF:000011">
    <property type="entry name" value="Carbamoyl-phosphate synthase small chain"/>
    <property type="match status" value="1"/>
</dbReference>
<dbReference type="FunFam" id="3.50.30.20:FF:000001">
    <property type="entry name" value="Carbamoyl-phosphate synthase small chain"/>
    <property type="match status" value="1"/>
</dbReference>
<dbReference type="Gene3D" id="3.40.50.880">
    <property type="match status" value="1"/>
</dbReference>
<dbReference type="Gene3D" id="3.50.30.20">
    <property type="entry name" value="Carbamoyl-phosphate synthase small subunit, N-terminal domain"/>
    <property type="match status" value="1"/>
</dbReference>
<dbReference type="HAMAP" id="MF_01209">
    <property type="entry name" value="CPSase_S_chain"/>
    <property type="match status" value="1"/>
</dbReference>
<dbReference type="InterPro" id="IPR050472">
    <property type="entry name" value="Anth_synth/Amidotransfase"/>
</dbReference>
<dbReference type="InterPro" id="IPR006274">
    <property type="entry name" value="CarbamoylP_synth_ssu"/>
</dbReference>
<dbReference type="InterPro" id="IPR002474">
    <property type="entry name" value="CarbamoylP_synth_ssu_N"/>
</dbReference>
<dbReference type="InterPro" id="IPR036480">
    <property type="entry name" value="CarbP_synth_ssu_N_sf"/>
</dbReference>
<dbReference type="InterPro" id="IPR029062">
    <property type="entry name" value="Class_I_gatase-like"/>
</dbReference>
<dbReference type="InterPro" id="IPR035686">
    <property type="entry name" value="CPSase_GATase1"/>
</dbReference>
<dbReference type="InterPro" id="IPR017926">
    <property type="entry name" value="GATASE"/>
</dbReference>
<dbReference type="NCBIfam" id="TIGR01368">
    <property type="entry name" value="CPSaseIIsmall"/>
    <property type="match status" value="1"/>
</dbReference>
<dbReference type="NCBIfam" id="NF009475">
    <property type="entry name" value="PRK12838.1"/>
    <property type="match status" value="1"/>
</dbReference>
<dbReference type="PANTHER" id="PTHR43418:SF7">
    <property type="entry name" value="CARBAMOYL-PHOSPHATE SYNTHASE SMALL CHAIN"/>
    <property type="match status" value="1"/>
</dbReference>
<dbReference type="PANTHER" id="PTHR43418">
    <property type="entry name" value="MULTIFUNCTIONAL TRYPTOPHAN BIOSYNTHESIS PROTEIN-RELATED"/>
    <property type="match status" value="1"/>
</dbReference>
<dbReference type="Pfam" id="PF00988">
    <property type="entry name" value="CPSase_sm_chain"/>
    <property type="match status" value="1"/>
</dbReference>
<dbReference type="Pfam" id="PF00117">
    <property type="entry name" value="GATase"/>
    <property type="match status" value="1"/>
</dbReference>
<dbReference type="PRINTS" id="PR00097">
    <property type="entry name" value="ANTSNTHASEII"/>
</dbReference>
<dbReference type="PRINTS" id="PR00099">
    <property type="entry name" value="CPSGATASE"/>
</dbReference>
<dbReference type="PRINTS" id="PR00096">
    <property type="entry name" value="GATASE"/>
</dbReference>
<dbReference type="SMART" id="SM01097">
    <property type="entry name" value="CPSase_sm_chain"/>
    <property type="match status" value="1"/>
</dbReference>
<dbReference type="SUPFAM" id="SSF52021">
    <property type="entry name" value="Carbamoyl phosphate synthetase, small subunit N-terminal domain"/>
    <property type="match status" value="1"/>
</dbReference>
<dbReference type="SUPFAM" id="SSF52317">
    <property type="entry name" value="Class I glutamine amidotransferase-like"/>
    <property type="match status" value="1"/>
</dbReference>
<dbReference type="PROSITE" id="PS51273">
    <property type="entry name" value="GATASE_TYPE_1"/>
    <property type="match status" value="1"/>
</dbReference>
<feature type="chain" id="PRO_0000112350" description="Carbamoyl phosphate synthase small chain">
    <location>
        <begin position="1"/>
        <end position="374"/>
    </location>
</feature>
<feature type="domain" description="Glutamine amidotransferase type-1" evidence="1">
    <location>
        <begin position="189"/>
        <end position="374"/>
    </location>
</feature>
<feature type="region of interest" description="CPSase" evidence="1">
    <location>
        <begin position="1"/>
        <end position="186"/>
    </location>
</feature>
<feature type="active site" description="Nucleophile" evidence="1">
    <location>
        <position position="265"/>
    </location>
</feature>
<feature type="active site" evidence="1">
    <location>
        <position position="349"/>
    </location>
</feature>
<feature type="active site" evidence="1">
    <location>
        <position position="351"/>
    </location>
</feature>
<feature type="binding site" evidence="1">
    <location>
        <position position="47"/>
    </location>
    <ligand>
        <name>L-glutamine</name>
        <dbReference type="ChEBI" id="CHEBI:58359"/>
    </ligand>
</feature>
<feature type="binding site" evidence="1">
    <location>
        <position position="237"/>
    </location>
    <ligand>
        <name>L-glutamine</name>
        <dbReference type="ChEBI" id="CHEBI:58359"/>
    </ligand>
</feature>
<feature type="binding site" evidence="1">
    <location>
        <position position="239"/>
    </location>
    <ligand>
        <name>L-glutamine</name>
        <dbReference type="ChEBI" id="CHEBI:58359"/>
    </ligand>
</feature>
<feature type="binding site" evidence="1">
    <location>
        <position position="266"/>
    </location>
    <ligand>
        <name>L-glutamine</name>
        <dbReference type="ChEBI" id="CHEBI:58359"/>
    </ligand>
</feature>
<feature type="binding site" evidence="1">
    <location>
        <position position="269"/>
    </location>
    <ligand>
        <name>L-glutamine</name>
        <dbReference type="ChEBI" id="CHEBI:58359"/>
    </ligand>
</feature>
<feature type="binding site" evidence="1">
    <location>
        <position position="307"/>
    </location>
    <ligand>
        <name>L-glutamine</name>
        <dbReference type="ChEBI" id="CHEBI:58359"/>
    </ligand>
</feature>
<feature type="binding site" evidence="1">
    <location>
        <position position="309"/>
    </location>
    <ligand>
        <name>L-glutamine</name>
        <dbReference type="ChEBI" id="CHEBI:58359"/>
    </ligand>
</feature>
<feature type="binding site" evidence="1">
    <location>
        <position position="310"/>
    </location>
    <ligand>
        <name>L-glutamine</name>
        <dbReference type="ChEBI" id="CHEBI:58359"/>
    </ligand>
</feature>
<sequence>MTEPAILVLEDGTVFEGDAVGANGLSVGEVVFNTSLTGYQEVLTDPSYAYQLVTLTYPHIGNTGCTDQDDEANKVWAAGLIVRDVPRRPSNWRSQISLSDWLAARGVVAIAGIDTRKLTRILREKGAQHGALMAGEIDVDRAQDAARQFTGIKGMDLAKVVSTKQAYSWYEGQLDLDRNEWKRAAPQYKVVAYDYGVKLNILRMLAERGCDLTVVPAQTPVDEVLALCPDGVFLSNGPGDPEPCDYAVAAIKTFIMRRVPIFGICLGHQLLAQTVGAKVVKMRHGHHGANHPVQDLRSGRVMITSQNHGFAVDEATLPSNVRVTHRSLFDGTNQGIELLDVPAFSFQGHPEASPGPHDVDVLFDRFITMMAAQS</sequence>
<accession>Q9PEC2</accession>